<sequence>MKIAVAGSGYVGLSLGVLLSLQNEVTIVDILPSKVDKINNGLSPIQDEYIEYYLKSKQLSIKATLDSKAAYKEAELVIIATPTNYNSRINYFDTQHVETVIKEVLSVNSHATLIIKSTIPIGFITEMRQKFQTDRIIFSPEFLRESKALYDNLYPSRIIVSCEENDSPKVKADAEKFALLLKSAAKKNNVPVLIMGASEAEAVKLFANTYLALRVAYFNELDTYAESRKLNSHMIIQGISYDDRIGMHYNNPSFGYGGYCLPKDTKQLLANYNNIPQTLIEAIVSSNNVRKSYIAKQIINVLEERESPVKVVGVYRLIMKSNSDNFRESAIKDVIDILKSKDIKIIIYEPMLNKLESEDQSVLVNDLENFKKQANIIVTNRYDNELQDVKNKVYSRDIFNRD</sequence>
<evidence type="ECO:0000250" key="1"/>
<evidence type="ECO:0000250" key="2">
    <source>
        <dbReference type="UniProtKB" id="Q0P8H3"/>
    </source>
</evidence>
<evidence type="ECO:0000255" key="3"/>
<evidence type="ECO:0000305" key="4"/>
<protein>
    <recommendedName>
        <fullName>UDP-glucose 6-dehydrogenase</fullName>
        <shortName>UDP-Glc dehydrogenase</shortName>
        <shortName>UDP-GlcDH</shortName>
        <shortName>UDPGDH</shortName>
        <ecNumber>1.1.1.22</ecNumber>
    </recommendedName>
</protein>
<keyword id="KW-0972">Capsule biogenesis/degradation</keyword>
<keyword id="KW-0520">NAD</keyword>
<keyword id="KW-0560">Oxidoreductase</keyword>
<keyword id="KW-1185">Reference proteome</keyword>
<reference key="1">
    <citation type="journal article" date="2001" name="Proc. Natl. Acad. Sci. U.S.A.">
        <title>Complete genome sequence of an M1 strain of Streptococcus pyogenes.</title>
        <authorList>
            <person name="Ferretti J.J."/>
            <person name="McShan W.M."/>
            <person name="Ajdic D.J."/>
            <person name="Savic D.J."/>
            <person name="Savic G."/>
            <person name="Lyon K."/>
            <person name="Primeaux C."/>
            <person name="Sezate S."/>
            <person name="Suvorov A.N."/>
            <person name="Kenton S."/>
            <person name="Lai H.S."/>
            <person name="Lin S.P."/>
            <person name="Qian Y."/>
            <person name="Jia H.G."/>
            <person name="Najar F.Z."/>
            <person name="Ren Q."/>
            <person name="Zhu H."/>
            <person name="Song L."/>
            <person name="White J."/>
            <person name="Yuan X."/>
            <person name="Clifton S.W."/>
            <person name="Roe B.A."/>
            <person name="McLaughlin R.E."/>
        </authorList>
    </citation>
    <scope>NUCLEOTIDE SEQUENCE [LARGE SCALE GENOMIC DNA]</scope>
    <source>
        <strain>ATCC 700294 / SF370 / Serotype M1</strain>
    </source>
</reference>
<reference key="2">
    <citation type="journal article" date="2005" name="J. Infect. Dis.">
        <title>Evolutionary origin and emergence of a highly successful clone of serotype M1 group A Streptococcus involved multiple horizontal gene transfer events.</title>
        <authorList>
            <person name="Sumby P."/>
            <person name="Porcella S.F."/>
            <person name="Madrigal A.G."/>
            <person name="Barbian K.D."/>
            <person name="Virtaneva K."/>
            <person name="Ricklefs S.M."/>
            <person name="Sturdevant D.E."/>
            <person name="Graham M.R."/>
            <person name="Vuopio-Varkila J."/>
            <person name="Hoe N.P."/>
            <person name="Musser J.M."/>
        </authorList>
    </citation>
    <scope>NUCLEOTIDE SEQUENCE [LARGE SCALE GENOMIC DNA]</scope>
    <source>
        <strain>ATCC BAA-947 / MGAS5005 / Serotype M1</strain>
    </source>
</reference>
<accession>P0C0F5</accession>
<accession>Q07172</accession>
<accession>Q48W05</accession>
<proteinExistence type="inferred from homology"/>
<name>UDG_STRP1</name>
<feature type="chain" id="PRO_0000074055" description="UDP-glucose 6-dehydrogenase">
    <location>
        <begin position="1"/>
        <end position="402"/>
    </location>
</feature>
<feature type="active site" description="Nucleophile" evidence="2">
    <location>
        <position position="260"/>
    </location>
</feature>
<feature type="binding site" evidence="3">
    <location>
        <begin position="2"/>
        <end position="19"/>
    </location>
    <ligand>
        <name>NAD(+)</name>
        <dbReference type="ChEBI" id="CHEBI:57540"/>
    </ligand>
</feature>
<feature type="binding site" evidence="2">
    <location>
        <position position="11"/>
    </location>
    <ligand>
        <name>NAD(+)</name>
        <dbReference type="ChEBI" id="CHEBI:57540"/>
    </ligand>
</feature>
<feature type="binding site" evidence="2">
    <location>
        <position position="29"/>
    </location>
    <ligand>
        <name>NAD(+)</name>
        <dbReference type="ChEBI" id="CHEBI:57540"/>
    </ligand>
</feature>
<feature type="binding site" evidence="2">
    <location>
        <position position="34"/>
    </location>
    <ligand>
        <name>NAD(+)</name>
        <dbReference type="ChEBI" id="CHEBI:57540"/>
    </ligand>
</feature>
<feature type="binding site" evidence="2">
    <location>
        <position position="83"/>
    </location>
    <ligand>
        <name>NAD(+)</name>
        <dbReference type="ChEBI" id="CHEBI:57540"/>
    </ligand>
</feature>
<feature type="binding site" evidence="2">
    <location>
        <position position="118"/>
    </location>
    <ligand>
        <name>NAD(+)</name>
        <dbReference type="ChEBI" id="CHEBI:57540"/>
    </ligand>
</feature>
<feature type="binding site" evidence="2">
    <location>
        <begin position="141"/>
        <end position="145"/>
    </location>
    <ligand>
        <name>substrate</name>
    </ligand>
</feature>
<feature type="binding site" evidence="2">
    <location>
        <position position="145"/>
    </location>
    <ligand>
        <name>NAD(+)</name>
        <dbReference type="ChEBI" id="CHEBI:57540"/>
    </ligand>
</feature>
<feature type="binding site" evidence="2">
    <location>
        <position position="204"/>
    </location>
    <ligand>
        <name>substrate</name>
    </ligand>
</feature>
<feature type="binding site" evidence="2">
    <location>
        <position position="208"/>
    </location>
    <ligand>
        <name>substrate</name>
    </ligand>
</feature>
<feature type="binding site" evidence="2">
    <location>
        <begin position="249"/>
        <end position="253"/>
    </location>
    <ligand>
        <name>substrate</name>
    </ligand>
</feature>
<feature type="binding site" evidence="2">
    <location>
        <position position="257"/>
    </location>
    <ligand>
        <name>substrate</name>
    </ligand>
</feature>
<feature type="binding site" evidence="2">
    <location>
        <position position="259"/>
    </location>
    <ligand>
        <name>NAD(+)</name>
        <dbReference type="ChEBI" id="CHEBI:57540"/>
    </ligand>
</feature>
<feature type="binding site" evidence="2">
    <location>
        <position position="263"/>
    </location>
    <ligand>
        <name>NAD(+)</name>
        <dbReference type="ChEBI" id="CHEBI:57540"/>
    </ligand>
</feature>
<feature type="binding site" evidence="2">
    <location>
        <position position="320"/>
    </location>
    <ligand>
        <name>substrate</name>
    </ligand>
</feature>
<feature type="binding site" evidence="2">
    <location>
        <position position="327"/>
    </location>
    <ligand>
        <name>NAD(+)</name>
        <dbReference type="ChEBI" id="CHEBI:57540"/>
    </ligand>
</feature>
<comment type="function">
    <text evidence="1">Catalyzes the formation of UDP-glucuronic acid which is required for capsular hyaluronic acid synthesis.</text>
</comment>
<comment type="catalytic activity">
    <reaction>
        <text>UDP-alpha-D-glucose + 2 NAD(+) + H2O = UDP-alpha-D-glucuronate + 2 NADH + 3 H(+)</text>
        <dbReference type="Rhea" id="RHEA:23596"/>
        <dbReference type="ChEBI" id="CHEBI:15377"/>
        <dbReference type="ChEBI" id="CHEBI:15378"/>
        <dbReference type="ChEBI" id="CHEBI:57540"/>
        <dbReference type="ChEBI" id="CHEBI:57945"/>
        <dbReference type="ChEBI" id="CHEBI:58052"/>
        <dbReference type="ChEBI" id="CHEBI:58885"/>
        <dbReference type="EC" id="1.1.1.22"/>
    </reaction>
</comment>
<comment type="pathway">
    <text>Nucleotide-sugar biosynthesis; UDP-alpha-D-glucuronate biosynthesis; UDP-alpha-D-glucuronate from UDP-alpha-D-glucose: step 1/1.</text>
</comment>
<comment type="similarity">
    <text evidence="4">Belongs to the UDP-glucose/GDP-mannose dehydrogenase family.</text>
</comment>
<organism>
    <name type="scientific">Streptococcus pyogenes serotype M1</name>
    <dbReference type="NCBI Taxonomy" id="301447"/>
    <lineage>
        <taxon>Bacteria</taxon>
        <taxon>Bacillati</taxon>
        <taxon>Bacillota</taxon>
        <taxon>Bacilli</taxon>
        <taxon>Lactobacillales</taxon>
        <taxon>Streptococcaceae</taxon>
        <taxon>Streptococcus</taxon>
    </lineage>
</organism>
<dbReference type="EC" id="1.1.1.22"/>
<dbReference type="EMBL" id="AE004092">
    <property type="protein sequence ID" value="AAK34829.1"/>
    <property type="molecule type" value="Genomic_DNA"/>
</dbReference>
<dbReference type="EMBL" id="CP000017">
    <property type="protein sequence ID" value="AAZ52470.1"/>
    <property type="molecule type" value="Genomic_DNA"/>
</dbReference>
<dbReference type="RefSeq" id="NP_270108.1">
    <property type="nucleotide sequence ID" value="NC_002737.2"/>
</dbReference>
<dbReference type="SMR" id="P0C0F5"/>
<dbReference type="PaxDb" id="1314-HKU360_01962"/>
<dbReference type="KEGG" id="spy:SPy_2201"/>
<dbReference type="KEGG" id="spz:M5005_Spy1852"/>
<dbReference type="PATRIC" id="fig|160490.10.peg.1906"/>
<dbReference type="HOGENOM" id="CLU_023810_2_0_9"/>
<dbReference type="OMA" id="GYIYHSI"/>
<dbReference type="UniPathway" id="UPA00038">
    <property type="reaction ID" value="UER00491"/>
</dbReference>
<dbReference type="Proteomes" id="UP000000750">
    <property type="component" value="Chromosome"/>
</dbReference>
<dbReference type="GO" id="GO:0051287">
    <property type="term" value="F:NAD binding"/>
    <property type="evidence" value="ECO:0000250"/>
    <property type="project" value="UniProtKB"/>
</dbReference>
<dbReference type="GO" id="GO:0003979">
    <property type="term" value="F:UDP-glucose 6-dehydrogenase activity"/>
    <property type="evidence" value="ECO:0000250"/>
    <property type="project" value="UniProtKB"/>
</dbReference>
<dbReference type="GO" id="GO:0000271">
    <property type="term" value="P:polysaccharide biosynthetic process"/>
    <property type="evidence" value="ECO:0007669"/>
    <property type="project" value="InterPro"/>
</dbReference>
<dbReference type="GO" id="GO:0006065">
    <property type="term" value="P:UDP-glucuronate biosynthetic process"/>
    <property type="evidence" value="ECO:0007669"/>
    <property type="project" value="UniProtKB-UniPathway"/>
</dbReference>
<dbReference type="FunFam" id="3.40.50.720:FF:000400">
    <property type="entry name" value="UDP-glucose 6-dehydrogenase"/>
    <property type="match status" value="1"/>
</dbReference>
<dbReference type="Gene3D" id="1.10.1040.10">
    <property type="entry name" value="N-(1-d-carboxylethyl)-l-norvaline Dehydrogenase, domain 2"/>
    <property type="match status" value="1"/>
</dbReference>
<dbReference type="Gene3D" id="3.40.50.720">
    <property type="entry name" value="NAD(P)-binding Rossmann-like Domain"/>
    <property type="match status" value="2"/>
</dbReference>
<dbReference type="InterPro" id="IPR008927">
    <property type="entry name" value="6-PGluconate_DH-like_C_sf"/>
</dbReference>
<dbReference type="InterPro" id="IPR013328">
    <property type="entry name" value="6PGD_dom2"/>
</dbReference>
<dbReference type="InterPro" id="IPR036291">
    <property type="entry name" value="NAD(P)-bd_dom_sf"/>
</dbReference>
<dbReference type="InterPro" id="IPR017476">
    <property type="entry name" value="UDP-Glc/GDP-Man"/>
</dbReference>
<dbReference type="InterPro" id="IPR014027">
    <property type="entry name" value="UDP-Glc/GDP-Man_DH_C"/>
</dbReference>
<dbReference type="InterPro" id="IPR036220">
    <property type="entry name" value="UDP-Glc/GDP-Man_DH_C_sf"/>
</dbReference>
<dbReference type="InterPro" id="IPR014026">
    <property type="entry name" value="UDP-Glc/GDP-Man_DH_dimer"/>
</dbReference>
<dbReference type="InterPro" id="IPR001732">
    <property type="entry name" value="UDP-Glc/GDP-Man_DH_N"/>
</dbReference>
<dbReference type="InterPro" id="IPR028357">
    <property type="entry name" value="UDPglc_DH_bac"/>
</dbReference>
<dbReference type="NCBIfam" id="TIGR03026">
    <property type="entry name" value="NDP-sugDHase"/>
    <property type="match status" value="1"/>
</dbReference>
<dbReference type="PANTHER" id="PTHR43750:SF2">
    <property type="entry name" value="UDP-GLUCOSE 6-DEHYDROGENASE"/>
    <property type="match status" value="1"/>
</dbReference>
<dbReference type="PANTHER" id="PTHR43750">
    <property type="entry name" value="UDP-GLUCOSE 6-DEHYDROGENASE TUAD"/>
    <property type="match status" value="1"/>
</dbReference>
<dbReference type="Pfam" id="PF00984">
    <property type="entry name" value="UDPG_MGDP_dh"/>
    <property type="match status" value="1"/>
</dbReference>
<dbReference type="Pfam" id="PF03720">
    <property type="entry name" value="UDPG_MGDP_dh_C"/>
    <property type="match status" value="1"/>
</dbReference>
<dbReference type="Pfam" id="PF03721">
    <property type="entry name" value="UDPG_MGDP_dh_N"/>
    <property type="match status" value="1"/>
</dbReference>
<dbReference type="PIRSF" id="PIRSF500134">
    <property type="entry name" value="UDPglc_DH_bac"/>
    <property type="match status" value="1"/>
</dbReference>
<dbReference type="PIRSF" id="PIRSF000124">
    <property type="entry name" value="UDPglc_GDPman_dh"/>
    <property type="match status" value="1"/>
</dbReference>
<dbReference type="SMART" id="SM00984">
    <property type="entry name" value="UDPG_MGDP_dh_C"/>
    <property type="match status" value="1"/>
</dbReference>
<dbReference type="SUPFAM" id="SSF48179">
    <property type="entry name" value="6-phosphogluconate dehydrogenase C-terminal domain-like"/>
    <property type="match status" value="1"/>
</dbReference>
<dbReference type="SUPFAM" id="SSF51735">
    <property type="entry name" value="NAD(P)-binding Rossmann-fold domains"/>
    <property type="match status" value="1"/>
</dbReference>
<dbReference type="SUPFAM" id="SSF52413">
    <property type="entry name" value="UDP-glucose/GDP-mannose dehydrogenase C-terminal domain"/>
    <property type="match status" value="1"/>
</dbReference>
<gene>
    <name type="primary">hasB</name>
    <name type="ordered locus">SPy_2201</name>
    <name type="ordered locus">M5005_Spy1852</name>
</gene>